<evidence type="ECO:0000250" key="1"/>
<evidence type="ECO:0000250" key="2">
    <source>
        <dbReference type="UniProtKB" id="Q9NX24"/>
    </source>
</evidence>
<evidence type="ECO:0000305" key="3"/>
<name>NHP2_MOUSE</name>
<sequence>MTKVKAAPEESEAQAEGCSEERTYKELLVNLNPIAQPLASRRLTRKLYKCIKKAVKQKQIRRGVKEVQKFVNKGEKGIMVLAGDTLPIEVYCHLPVLCEDQNLPYVYIPSKTDLGAATGSKRPTCVIMVKPHEEYQETYDKCLEEVQALPTPL</sequence>
<gene>
    <name type="primary">Nhp2</name>
    <name type="synonym">Nola2</name>
</gene>
<accession>Q9CRB2</accession>
<organism>
    <name type="scientific">Mus musculus</name>
    <name type="common">Mouse</name>
    <dbReference type="NCBI Taxonomy" id="10090"/>
    <lineage>
        <taxon>Eukaryota</taxon>
        <taxon>Metazoa</taxon>
        <taxon>Chordata</taxon>
        <taxon>Craniata</taxon>
        <taxon>Vertebrata</taxon>
        <taxon>Euteleostomi</taxon>
        <taxon>Mammalia</taxon>
        <taxon>Eutheria</taxon>
        <taxon>Euarchontoglires</taxon>
        <taxon>Glires</taxon>
        <taxon>Rodentia</taxon>
        <taxon>Myomorpha</taxon>
        <taxon>Muroidea</taxon>
        <taxon>Muridae</taxon>
        <taxon>Murinae</taxon>
        <taxon>Mus</taxon>
        <taxon>Mus</taxon>
    </lineage>
</organism>
<comment type="function">
    <text evidence="1">Required for ribosome biogenesis and telomere maintenance. Part of the H/ACA small nucleolar ribonucleoprotein (H/ACA snoRNP) complex, which catalyzes pseudouridylation of rRNA. This involves the isomerization of uridine such that the ribose is subsequently attached to C5, instead of the normal N1. Each rRNA can contain up to 100 pseudouridine ('psi') residues, which may serve to stabilize the conformation of rRNAs. May also be required for correct processing or intranuclear trafficking of TERC, the RNA component of the telomerase reverse transcriptase (TERT) holoenzyme (By similarity).</text>
</comment>
<comment type="subunit">
    <text evidence="2">Part of the H/ACA small nucleolar ribonucleoprotein (H/ACA snoRNP) complex, which contains NHP2/NOLA2, GAR1/NOLA1, NOP10/NOLA3, and DKC1/NOLA4, which is presumed to be the catalytic subunit. The complex contains a stable core formed by binding of one or two NOP10-DKC1 heterodimers to NHP2; GAR1 subsequently binds to this core via DKC1. The complex binds a box H/ACA small nucleolar RNA (snoRNA), which may target the specific site of modification within the RNA substrate. During assembly, the complex contains NAF1 instead of GAR1/NOLA1. The complex also interacts with TERC, which contains a 3'-terminal domain related to the box H/ACA snoRNAs. Specific interactions with snoRNAs or TERC are mediated by GAR1 and NHP2. Associates with NOLC1/NOPP140. H/ACA snoRNPs interact with the SMN complex, consisting of SMN1 or SMN2, GEMIN2/SIP1, DDX20/GEMIN3, and GEMIN4. This is mediated by interaction between GAR1 and SMN1 or SMN2. The SMN complex may be required for correct assembly of the H/ACA snoRNP complex. Component of the telomerase holoenzyme complex composed of one molecule of TERT, one molecule of WRAP53/TCAB1, two molecules of H/ACA ribonucleoprotein complex subunits DKC1, NOP10, NHP2 and GAR1, and a telomerase RNA template component (TERC). The telomerase holoenzyme complex is associated with TEP1, SMG6/EST1A and POT1.</text>
</comment>
<comment type="subcellular location">
    <subcellularLocation>
        <location evidence="1">Nucleus</location>
        <location evidence="1">Nucleolus</location>
    </subcellularLocation>
    <subcellularLocation>
        <location evidence="1">Nucleus</location>
        <location evidence="1">Cajal body</location>
    </subcellularLocation>
    <text evidence="1">Also localized to Cajal bodies (coiled bodies).</text>
</comment>
<comment type="similarity">
    <text evidence="3">Belongs to the eukaryotic ribosomal protein eL8 family.</text>
</comment>
<dbReference type="EMBL" id="AK007340">
    <property type="protein sequence ID" value="BAB24973.1"/>
    <property type="molecule type" value="mRNA"/>
</dbReference>
<dbReference type="EMBL" id="AK008766">
    <property type="protein sequence ID" value="BAB25882.1"/>
    <property type="molecule type" value="mRNA"/>
</dbReference>
<dbReference type="EMBL" id="AK019134">
    <property type="protein sequence ID" value="BAB31561.1"/>
    <property type="molecule type" value="mRNA"/>
</dbReference>
<dbReference type="EMBL" id="BC024944">
    <property type="protein sequence ID" value="AAH24944.1"/>
    <property type="molecule type" value="mRNA"/>
</dbReference>
<dbReference type="CCDS" id="CCDS24655.1"/>
<dbReference type="RefSeq" id="NP_080907.1">
    <property type="nucleotide sequence ID" value="NM_026631.4"/>
</dbReference>
<dbReference type="SMR" id="Q9CRB2"/>
<dbReference type="BioGRID" id="206642">
    <property type="interactions" value="5"/>
</dbReference>
<dbReference type="ComplexPortal" id="CPX-1124">
    <property type="entry name" value="Telomerase holoenzyme complex"/>
</dbReference>
<dbReference type="FunCoup" id="Q9CRB2">
    <property type="interactions" value="1812"/>
</dbReference>
<dbReference type="IntAct" id="Q9CRB2">
    <property type="interactions" value="2"/>
</dbReference>
<dbReference type="MINT" id="Q9CRB2"/>
<dbReference type="STRING" id="10090.ENSMUSP00000120014"/>
<dbReference type="iPTMnet" id="Q9CRB2"/>
<dbReference type="PhosphoSitePlus" id="Q9CRB2"/>
<dbReference type="SwissPalm" id="Q9CRB2"/>
<dbReference type="PaxDb" id="10090-ENSMUSP00000120014"/>
<dbReference type="PeptideAtlas" id="Q9CRB2"/>
<dbReference type="ProteomicsDB" id="252835"/>
<dbReference type="Pumba" id="Q9CRB2"/>
<dbReference type="Antibodypedia" id="46084">
    <property type="antibodies" value="100 antibodies from 26 providers"/>
</dbReference>
<dbReference type="DNASU" id="52530"/>
<dbReference type="Ensembl" id="ENSMUST00000127405.2">
    <property type="protein sequence ID" value="ENSMUSP00000120014.2"/>
    <property type="gene ID" value="ENSMUSG00000001056.4"/>
</dbReference>
<dbReference type="GeneID" id="52530"/>
<dbReference type="KEGG" id="mmu:52530"/>
<dbReference type="UCSC" id="uc007iuc.1">
    <property type="organism name" value="mouse"/>
</dbReference>
<dbReference type="AGR" id="MGI:1098547"/>
<dbReference type="CTD" id="55651"/>
<dbReference type="MGI" id="MGI:1098547">
    <property type="gene designation" value="Nhp2"/>
</dbReference>
<dbReference type="VEuPathDB" id="HostDB:ENSMUSG00000001056"/>
<dbReference type="eggNOG" id="KOG3167">
    <property type="taxonomic scope" value="Eukaryota"/>
</dbReference>
<dbReference type="GeneTree" id="ENSGT00550000074939"/>
<dbReference type="HOGENOM" id="CLU_084513_1_0_1"/>
<dbReference type="InParanoid" id="Q9CRB2"/>
<dbReference type="OMA" id="EDNYEAR"/>
<dbReference type="OrthoDB" id="5364946at2759"/>
<dbReference type="PhylomeDB" id="Q9CRB2"/>
<dbReference type="TreeFam" id="TF105839"/>
<dbReference type="Reactome" id="R-MMU-171319">
    <property type="pathway name" value="Telomere Extension By Telomerase"/>
</dbReference>
<dbReference type="BioGRID-ORCS" id="52530">
    <property type="hits" value="26 hits in 80 CRISPR screens"/>
</dbReference>
<dbReference type="ChiTaRS" id="Nhp2">
    <property type="organism name" value="mouse"/>
</dbReference>
<dbReference type="PRO" id="PR:Q9CRB2"/>
<dbReference type="Proteomes" id="UP000000589">
    <property type="component" value="Chromosome 11"/>
</dbReference>
<dbReference type="RNAct" id="Q9CRB2">
    <property type="molecule type" value="protein"/>
</dbReference>
<dbReference type="Bgee" id="ENSMUSG00000001056">
    <property type="expression patterns" value="Expressed in primitive streak and 270 other cell types or tissues"/>
</dbReference>
<dbReference type="GO" id="GO:0031429">
    <property type="term" value="C:box H/ACA snoRNP complex"/>
    <property type="evidence" value="ECO:0007669"/>
    <property type="project" value="Ensembl"/>
</dbReference>
<dbReference type="GO" id="GO:0090661">
    <property type="term" value="C:box H/ACA telomerase RNP complex"/>
    <property type="evidence" value="ECO:0007669"/>
    <property type="project" value="Ensembl"/>
</dbReference>
<dbReference type="GO" id="GO:0015030">
    <property type="term" value="C:Cajal body"/>
    <property type="evidence" value="ECO:0007669"/>
    <property type="project" value="UniProtKB-SubCell"/>
</dbReference>
<dbReference type="GO" id="GO:0005732">
    <property type="term" value="C:sno(s)RNA-containing ribonucleoprotein complex"/>
    <property type="evidence" value="ECO:0000250"/>
    <property type="project" value="UniProtKB"/>
</dbReference>
<dbReference type="GO" id="GO:0005697">
    <property type="term" value="C:telomerase holoenzyme complex"/>
    <property type="evidence" value="ECO:0000250"/>
    <property type="project" value="UniProtKB"/>
</dbReference>
<dbReference type="GO" id="GO:0034513">
    <property type="term" value="F:box H/ACA snoRNA binding"/>
    <property type="evidence" value="ECO:0007669"/>
    <property type="project" value="Ensembl"/>
</dbReference>
<dbReference type="GO" id="GO:0003730">
    <property type="term" value="F:mRNA 3'-UTR binding"/>
    <property type="evidence" value="ECO:0007669"/>
    <property type="project" value="Ensembl"/>
</dbReference>
<dbReference type="GO" id="GO:0070034">
    <property type="term" value="F:telomerase RNA binding"/>
    <property type="evidence" value="ECO:0007669"/>
    <property type="project" value="Ensembl"/>
</dbReference>
<dbReference type="GO" id="GO:0034511">
    <property type="term" value="F:U3 snoRNA binding"/>
    <property type="evidence" value="ECO:0007669"/>
    <property type="project" value="Ensembl"/>
</dbReference>
<dbReference type="GO" id="GO:0031118">
    <property type="term" value="P:rRNA pseudouridine synthesis"/>
    <property type="evidence" value="ECO:0000250"/>
    <property type="project" value="UniProtKB"/>
</dbReference>
<dbReference type="GO" id="GO:0000454">
    <property type="term" value="P:snoRNA guided rRNA pseudouridine synthesis"/>
    <property type="evidence" value="ECO:0007669"/>
    <property type="project" value="Ensembl"/>
</dbReference>
<dbReference type="GO" id="GO:0007004">
    <property type="term" value="P:telomere maintenance via telomerase"/>
    <property type="evidence" value="ECO:0000250"/>
    <property type="project" value="UniProtKB"/>
</dbReference>
<dbReference type="FunFam" id="3.30.1330.30:FF:000016">
    <property type="entry name" value="H/ACA ribonucleoprotein complex subunit 2"/>
    <property type="match status" value="1"/>
</dbReference>
<dbReference type="Gene3D" id="3.30.1330.30">
    <property type="match status" value="1"/>
</dbReference>
<dbReference type="InterPro" id="IPR050257">
    <property type="entry name" value="eL8/uL1-like"/>
</dbReference>
<dbReference type="InterPro" id="IPR002415">
    <property type="entry name" value="H/ACA_rnp_Nhp2-like"/>
</dbReference>
<dbReference type="InterPro" id="IPR029064">
    <property type="entry name" value="Ribosomal_eL30-like_sf"/>
</dbReference>
<dbReference type="InterPro" id="IPR004038">
    <property type="entry name" value="Ribosomal_eL8/eL30/eS12/Gad45"/>
</dbReference>
<dbReference type="InterPro" id="IPR018492">
    <property type="entry name" value="Ribosomal_eL8/Nhp2"/>
</dbReference>
<dbReference type="PANTHER" id="PTHR23105">
    <property type="entry name" value="RIBOSOMAL PROTEIN L7AE FAMILY MEMBER"/>
    <property type="match status" value="1"/>
</dbReference>
<dbReference type="Pfam" id="PF01248">
    <property type="entry name" value="Ribosomal_L7Ae"/>
    <property type="match status" value="1"/>
</dbReference>
<dbReference type="PRINTS" id="PR00881">
    <property type="entry name" value="L7ARS6FAMILY"/>
</dbReference>
<dbReference type="PRINTS" id="PR00883">
    <property type="entry name" value="NUCLEARHMG"/>
</dbReference>
<dbReference type="SUPFAM" id="SSF55315">
    <property type="entry name" value="L30e-like"/>
    <property type="match status" value="1"/>
</dbReference>
<protein>
    <recommendedName>
        <fullName>H/ACA ribonucleoprotein complex subunit 2</fullName>
    </recommendedName>
    <alternativeName>
        <fullName>Nucleolar protein family A member 2</fullName>
    </alternativeName>
    <alternativeName>
        <fullName>snoRNP protein NHP2</fullName>
    </alternativeName>
</protein>
<keyword id="KW-1017">Isopeptide bond</keyword>
<keyword id="KW-0539">Nucleus</keyword>
<keyword id="KW-0597">Phosphoprotein</keyword>
<keyword id="KW-1185">Reference proteome</keyword>
<keyword id="KW-0687">Ribonucleoprotein</keyword>
<keyword id="KW-0690">Ribosome biogenesis</keyword>
<keyword id="KW-0694">RNA-binding</keyword>
<keyword id="KW-0698">rRNA processing</keyword>
<keyword id="KW-0832">Ubl conjugation</keyword>
<feature type="chain" id="PRO_0000136765" description="H/ACA ribonucleoprotein complex subunit 2">
    <location>
        <begin position="1"/>
        <end position="153"/>
    </location>
</feature>
<feature type="modified residue" description="Phosphoserine" evidence="2">
    <location>
        <position position="19"/>
    </location>
</feature>
<feature type="cross-link" description="Glycyl lysine isopeptide (Lys-Gly) (interchain with G-Cter in SUMO2)" evidence="2">
    <location>
        <position position="3"/>
    </location>
</feature>
<feature type="cross-link" description="Glycyl lysine isopeptide (Lys-Gly) (interchain with G-Cter in SUMO); alternate" evidence="1">
    <location>
        <position position="5"/>
    </location>
</feature>
<feature type="cross-link" description="Glycyl lysine isopeptide (Lys-Gly) (interchain with G-Cter in SUMO1); alternate" evidence="2">
    <location>
        <position position="5"/>
    </location>
</feature>
<feature type="cross-link" description="Glycyl lysine isopeptide (Lys-Gly) (interchain with G-Cter in SUMO2); alternate" evidence="2">
    <location>
        <position position="5"/>
    </location>
</feature>
<reference key="1">
    <citation type="journal article" date="2005" name="Science">
        <title>The transcriptional landscape of the mammalian genome.</title>
        <authorList>
            <person name="Carninci P."/>
            <person name="Kasukawa T."/>
            <person name="Katayama S."/>
            <person name="Gough J."/>
            <person name="Frith M.C."/>
            <person name="Maeda N."/>
            <person name="Oyama R."/>
            <person name="Ravasi T."/>
            <person name="Lenhard B."/>
            <person name="Wells C."/>
            <person name="Kodzius R."/>
            <person name="Shimokawa K."/>
            <person name="Bajic V.B."/>
            <person name="Brenner S.E."/>
            <person name="Batalov S."/>
            <person name="Forrest A.R."/>
            <person name="Zavolan M."/>
            <person name="Davis M.J."/>
            <person name="Wilming L.G."/>
            <person name="Aidinis V."/>
            <person name="Allen J.E."/>
            <person name="Ambesi-Impiombato A."/>
            <person name="Apweiler R."/>
            <person name="Aturaliya R.N."/>
            <person name="Bailey T.L."/>
            <person name="Bansal M."/>
            <person name="Baxter L."/>
            <person name="Beisel K.W."/>
            <person name="Bersano T."/>
            <person name="Bono H."/>
            <person name="Chalk A.M."/>
            <person name="Chiu K.P."/>
            <person name="Choudhary V."/>
            <person name="Christoffels A."/>
            <person name="Clutterbuck D.R."/>
            <person name="Crowe M.L."/>
            <person name="Dalla E."/>
            <person name="Dalrymple B.P."/>
            <person name="de Bono B."/>
            <person name="Della Gatta G."/>
            <person name="di Bernardo D."/>
            <person name="Down T."/>
            <person name="Engstrom P."/>
            <person name="Fagiolini M."/>
            <person name="Faulkner G."/>
            <person name="Fletcher C.F."/>
            <person name="Fukushima T."/>
            <person name="Furuno M."/>
            <person name="Futaki S."/>
            <person name="Gariboldi M."/>
            <person name="Georgii-Hemming P."/>
            <person name="Gingeras T.R."/>
            <person name="Gojobori T."/>
            <person name="Green R.E."/>
            <person name="Gustincich S."/>
            <person name="Harbers M."/>
            <person name="Hayashi Y."/>
            <person name="Hensch T.K."/>
            <person name="Hirokawa N."/>
            <person name="Hill D."/>
            <person name="Huminiecki L."/>
            <person name="Iacono M."/>
            <person name="Ikeo K."/>
            <person name="Iwama A."/>
            <person name="Ishikawa T."/>
            <person name="Jakt M."/>
            <person name="Kanapin A."/>
            <person name="Katoh M."/>
            <person name="Kawasawa Y."/>
            <person name="Kelso J."/>
            <person name="Kitamura H."/>
            <person name="Kitano H."/>
            <person name="Kollias G."/>
            <person name="Krishnan S.P."/>
            <person name="Kruger A."/>
            <person name="Kummerfeld S.K."/>
            <person name="Kurochkin I.V."/>
            <person name="Lareau L.F."/>
            <person name="Lazarevic D."/>
            <person name="Lipovich L."/>
            <person name="Liu J."/>
            <person name="Liuni S."/>
            <person name="McWilliam S."/>
            <person name="Madan Babu M."/>
            <person name="Madera M."/>
            <person name="Marchionni L."/>
            <person name="Matsuda H."/>
            <person name="Matsuzawa S."/>
            <person name="Miki H."/>
            <person name="Mignone F."/>
            <person name="Miyake S."/>
            <person name="Morris K."/>
            <person name="Mottagui-Tabar S."/>
            <person name="Mulder N."/>
            <person name="Nakano N."/>
            <person name="Nakauchi H."/>
            <person name="Ng P."/>
            <person name="Nilsson R."/>
            <person name="Nishiguchi S."/>
            <person name="Nishikawa S."/>
            <person name="Nori F."/>
            <person name="Ohara O."/>
            <person name="Okazaki Y."/>
            <person name="Orlando V."/>
            <person name="Pang K.C."/>
            <person name="Pavan W.J."/>
            <person name="Pavesi G."/>
            <person name="Pesole G."/>
            <person name="Petrovsky N."/>
            <person name="Piazza S."/>
            <person name="Reed J."/>
            <person name="Reid J.F."/>
            <person name="Ring B.Z."/>
            <person name="Ringwald M."/>
            <person name="Rost B."/>
            <person name="Ruan Y."/>
            <person name="Salzberg S.L."/>
            <person name="Sandelin A."/>
            <person name="Schneider C."/>
            <person name="Schoenbach C."/>
            <person name="Sekiguchi K."/>
            <person name="Semple C.A."/>
            <person name="Seno S."/>
            <person name="Sessa L."/>
            <person name="Sheng Y."/>
            <person name="Shibata Y."/>
            <person name="Shimada H."/>
            <person name="Shimada K."/>
            <person name="Silva D."/>
            <person name="Sinclair B."/>
            <person name="Sperling S."/>
            <person name="Stupka E."/>
            <person name="Sugiura K."/>
            <person name="Sultana R."/>
            <person name="Takenaka Y."/>
            <person name="Taki K."/>
            <person name="Tammoja K."/>
            <person name="Tan S.L."/>
            <person name="Tang S."/>
            <person name="Taylor M.S."/>
            <person name="Tegner J."/>
            <person name="Teichmann S.A."/>
            <person name="Ueda H.R."/>
            <person name="van Nimwegen E."/>
            <person name="Verardo R."/>
            <person name="Wei C.L."/>
            <person name="Yagi K."/>
            <person name="Yamanishi H."/>
            <person name="Zabarovsky E."/>
            <person name="Zhu S."/>
            <person name="Zimmer A."/>
            <person name="Hide W."/>
            <person name="Bult C."/>
            <person name="Grimmond S.M."/>
            <person name="Teasdale R.D."/>
            <person name="Liu E.T."/>
            <person name="Brusic V."/>
            <person name="Quackenbush J."/>
            <person name="Wahlestedt C."/>
            <person name="Mattick J.S."/>
            <person name="Hume D.A."/>
            <person name="Kai C."/>
            <person name="Sasaki D."/>
            <person name="Tomaru Y."/>
            <person name="Fukuda S."/>
            <person name="Kanamori-Katayama M."/>
            <person name="Suzuki M."/>
            <person name="Aoki J."/>
            <person name="Arakawa T."/>
            <person name="Iida J."/>
            <person name="Imamura K."/>
            <person name="Itoh M."/>
            <person name="Kato T."/>
            <person name="Kawaji H."/>
            <person name="Kawagashira N."/>
            <person name="Kawashima T."/>
            <person name="Kojima M."/>
            <person name="Kondo S."/>
            <person name="Konno H."/>
            <person name="Nakano K."/>
            <person name="Ninomiya N."/>
            <person name="Nishio T."/>
            <person name="Okada M."/>
            <person name="Plessy C."/>
            <person name="Shibata K."/>
            <person name="Shiraki T."/>
            <person name="Suzuki S."/>
            <person name="Tagami M."/>
            <person name="Waki K."/>
            <person name="Watahiki A."/>
            <person name="Okamura-Oho Y."/>
            <person name="Suzuki H."/>
            <person name="Kawai J."/>
            <person name="Hayashizaki Y."/>
        </authorList>
    </citation>
    <scope>NUCLEOTIDE SEQUENCE [LARGE SCALE MRNA]</scope>
    <source>
        <strain>C57BL/6J</strain>
        <tissue>Pancreas</tissue>
        <tissue>Stomach</tissue>
    </source>
</reference>
<reference key="2">
    <citation type="journal article" date="2004" name="Genome Res.">
        <title>The status, quality, and expansion of the NIH full-length cDNA project: the Mammalian Gene Collection (MGC).</title>
        <authorList>
            <consortium name="The MGC Project Team"/>
        </authorList>
    </citation>
    <scope>NUCLEOTIDE SEQUENCE [LARGE SCALE MRNA]</scope>
    <source>
        <strain>FVB/N</strain>
        <tissue>Mammary tumor</tissue>
    </source>
</reference>
<reference key="3">
    <citation type="journal article" date="2010" name="Cell">
        <title>A tissue-specific atlas of mouse protein phosphorylation and expression.</title>
        <authorList>
            <person name="Huttlin E.L."/>
            <person name="Jedrychowski M.P."/>
            <person name="Elias J.E."/>
            <person name="Goswami T."/>
            <person name="Rad R."/>
            <person name="Beausoleil S.A."/>
            <person name="Villen J."/>
            <person name="Haas W."/>
            <person name="Sowa M.E."/>
            <person name="Gygi S.P."/>
        </authorList>
    </citation>
    <scope>IDENTIFICATION BY MASS SPECTROMETRY [LARGE SCALE ANALYSIS]</scope>
    <source>
        <tissue>Kidney</tissue>
        <tissue>Liver</tissue>
        <tissue>Lung</tissue>
        <tissue>Pancreas</tissue>
        <tissue>Spleen</tissue>
        <tissue>Testis</tissue>
    </source>
</reference>
<proteinExistence type="evidence at protein level"/>